<gene>
    <name type="primary">dnaQ</name>
    <name type="ordered locus">RT0718</name>
</gene>
<evidence type="ECO:0000250" key="1"/>
<reference key="1">
    <citation type="journal article" date="2004" name="J. Bacteriol.">
        <title>Complete genome sequence of Rickettsia typhi and comparison with sequences of other Rickettsiae.</title>
        <authorList>
            <person name="McLeod M.P."/>
            <person name="Qin X."/>
            <person name="Karpathy S.E."/>
            <person name="Gioia J."/>
            <person name="Highlander S.K."/>
            <person name="Fox G.E."/>
            <person name="McNeill T.Z."/>
            <person name="Jiang H."/>
            <person name="Muzny D."/>
            <person name="Jacob L.S."/>
            <person name="Hawes A.C."/>
            <person name="Sodergren E."/>
            <person name="Gill R."/>
            <person name="Hume J."/>
            <person name="Morgan M."/>
            <person name="Fan G."/>
            <person name="Amin A.G."/>
            <person name="Gibbs R.A."/>
            <person name="Hong C."/>
            <person name="Yu X.-J."/>
            <person name="Walker D.H."/>
            <person name="Weinstock G.M."/>
        </authorList>
    </citation>
    <scope>NUCLEOTIDE SEQUENCE [LARGE SCALE GENOMIC DNA]</scope>
    <source>
        <strain>ATCC VR-144 / Wilmington</strain>
    </source>
</reference>
<comment type="function">
    <text evidence="1">DNA polymerase III is a complex, multichain enzyme responsible for most of the replicative synthesis in bacteria. The epsilon subunit contain the editing function and is a proofreading 3'-5' exonuclease (By similarity).</text>
</comment>
<comment type="catalytic activity">
    <reaction>
        <text>DNA(n) + a 2'-deoxyribonucleoside 5'-triphosphate = DNA(n+1) + diphosphate</text>
        <dbReference type="Rhea" id="RHEA:22508"/>
        <dbReference type="Rhea" id="RHEA-COMP:17339"/>
        <dbReference type="Rhea" id="RHEA-COMP:17340"/>
        <dbReference type="ChEBI" id="CHEBI:33019"/>
        <dbReference type="ChEBI" id="CHEBI:61560"/>
        <dbReference type="ChEBI" id="CHEBI:173112"/>
        <dbReference type="EC" id="2.7.7.7"/>
    </reaction>
</comment>
<comment type="cofactor">
    <cofactor evidence="1">
        <name>Mg(2+)</name>
        <dbReference type="ChEBI" id="CHEBI:18420"/>
    </cofactor>
    <cofactor evidence="1">
        <name>Mn(2+)</name>
        <dbReference type="ChEBI" id="CHEBI:29035"/>
    </cofactor>
    <text evidence="1">Binds 2 divalent metal cations. Magnesium or manganese.</text>
</comment>
<comment type="subunit">
    <text evidence="1">DNA polymerase III contains a core (composed of alpha, epsilon and theta chains) that associates with a tau subunit. This core dimerizes to form the POLIII' complex. PolIII' associates with the gamma complex (composed of gamma, delta, delta', psi and chi chains) and with the beta chain to form the complete DNA polymerase III complex (By similarity).</text>
</comment>
<sequence>MSSLREIILDTETTGLDPQQGHRIIEIGAIEMVNKVLTGKHFHCYINPERDMPFEAYKIHGISGEFLKDKPLFHTIANDFLKFIADSTLIIHNAPFDIKFLNHELSLLKRTEIKFLELTNTIDTLVMARSMFPGARYSLDALCKRFKVDNSGRQLHGALKDAALLAEVYVALTGGRQSTFKMIDKPNEINNLTVKCIEVQKIKRSIVVKPTKEELQKHKEFIDKILIQA</sequence>
<protein>
    <recommendedName>
        <fullName>DNA polymerase III subunit epsilon</fullName>
        <ecNumber>2.7.7.7</ecNumber>
    </recommendedName>
</protein>
<dbReference type="EC" id="2.7.7.7"/>
<dbReference type="EMBL" id="AE017197">
    <property type="protein sequence ID" value="AAU04176.1"/>
    <property type="molecule type" value="Genomic_DNA"/>
</dbReference>
<dbReference type="RefSeq" id="WP_011191152.1">
    <property type="nucleotide sequence ID" value="NC_006142.1"/>
</dbReference>
<dbReference type="SMR" id="Q68W16"/>
<dbReference type="KEGG" id="rty:RT0718"/>
<dbReference type="eggNOG" id="COG0847">
    <property type="taxonomic scope" value="Bacteria"/>
</dbReference>
<dbReference type="HOGENOM" id="CLU_047806_2_0_5"/>
<dbReference type="OrthoDB" id="9804290at2"/>
<dbReference type="Proteomes" id="UP000000604">
    <property type="component" value="Chromosome"/>
</dbReference>
<dbReference type="GO" id="GO:0005829">
    <property type="term" value="C:cytosol"/>
    <property type="evidence" value="ECO:0007669"/>
    <property type="project" value="TreeGrafter"/>
</dbReference>
<dbReference type="GO" id="GO:0008408">
    <property type="term" value="F:3'-5' exonuclease activity"/>
    <property type="evidence" value="ECO:0007669"/>
    <property type="project" value="TreeGrafter"/>
</dbReference>
<dbReference type="GO" id="GO:0003677">
    <property type="term" value="F:DNA binding"/>
    <property type="evidence" value="ECO:0007669"/>
    <property type="project" value="InterPro"/>
</dbReference>
<dbReference type="GO" id="GO:0003887">
    <property type="term" value="F:DNA-directed DNA polymerase activity"/>
    <property type="evidence" value="ECO:0007669"/>
    <property type="project" value="UniProtKB-KW"/>
</dbReference>
<dbReference type="GO" id="GO:0046872">
    <property type="term" value="F:metal ion binding"/>
    <property type="evidence" value="ECO:0007669"/>
    <property type="project" value="UniProtKB-KW"/>
</dbReference>
<dbReference type="GO" id="GO:0045004">
    <property type="term" value="P:DNA replication proofreading"/>
    <property type="evidence" value="ECO:0007669"/>
    <property type="project" value="TreeGrafter"/>
</dbReference>
<dbReference type="CDD" id="cd06131">
    <property type="entry name" value="DNA_pol_III_epsilon_Ecoli_like"/>
    <property type="match status" value="1"/>
</dbReference>
<dbReference type="FunFam" id="3.30.420.10:FF:000012">
    <property type="entry name" value="DNA polymerase III subunit epsilon"/>
    <property type="match status" value="1"/>
</dbReference>
<dbReference type="Gene3D" id="3.30.420.10">
    <property type="entry name" value="Ribonuclease H-like superfamily/Ribonuclease H"/>
    <property type="match status" value="1"/>
</dbReference>
<dbReference type="InterPro" id="IPR006054">
    <property type="entry name" value="DnaQ"/>
</dbReference>
<dbReference type="InterPro" id="IPR006309">
    <property type="entry name" value="DnaQ_proteo"/>
</dbReference>
<dbReference type="InterPro" id="IPR013520">
    <property type="entry name" value="Exonuclease_RNaseT/DNA_pol3"/>
</dbReference>
<dbReference type="InterPro" id="IPR012337">
    <property type="entry name" value="RNaseH-like_sf"/>
</dbReference>
<dbReference type="InterPro" id="IPR036397">
    <property type="entry name" value="RNaseH_sf"/>
</dbReference>
<dbReference type="NCBIfam" id="TIGR00573">
    <property type="entry name" value="dnaq"/>
    <property type="match status" value="1"/>
</dbReference>
<dbReference type="NCBIfam" id="TIGR01406">
    <property type="entry name" value="dnaQ_proteo"/>
    <property type="match status" value="1"/>
</dbReference>
<dbReference type="NCBIfam" id="NF004316">
    <property type="entry name" value="PRK05711.1"/>
    <property type="match status" value="1"/>
</dbReference>
<dbReference type="PANTHER" id="PTHR30231">
    <property type="entry name" value="DNA POLYMERASE III SUBUNIT EPSILON"/>
    <property type="match status" value="1"/>
</dbReference>
<dbReference type="PANTHER" id="PTHR30231:SF41">
    <property type="entry name" value="DNA POLYMERASE III SUBUNIT EPSILON"/>
    <property type="match status" value="1"/>
</dbReference>
<dbReference type="Pfam" id="PF00929">
    <property type="entry name" value="RNase_T"/>
    <property type="match status" value="1"/>
</dbReference>
<dbReference type="SMART" id="SM00479">
    <property type="entry name" value="EXOIII"/>
    <property type="match status" value="1"/>
</dbReference>
<dbReference type="SUPFAM" id="SSF53098">
    <property type="entry name" value="Ribonuclease H-like"/>
    <property type="match status" value="1"/>
</dbReference>
<keyword id="KW-0235">DNA replication</keyword>
<keyword id="KW-0239">DNA-directed DNA polymerase</keyword>
<keyword id="KW-0269">Exonuclease</keyword>
<keyword id="KW-0378">Hydrolase</keyword>
<keyword id="KW-0460">Magnesium</keyword>
<keyword id="KW-0464">Manganese</keyword>
<keyword id="KW-0479">Metal-binding</keyword>
<keyword id="KW-0540">Nuclease</keyword>
<keyword id="KW-0548">Nucleotidyltransferase</keyword>
<keyword id="KW-0808">Transferase</keyword>
<proteinExistence type="inferred from homology"/>
<name>DPO3E_RICTY</name>
<accession>Q68W16</accession>
<feature type="chain" id="PRO_0000280954" description="DNA polymerase III subunit epsilon">
    <location>
        <begin position="1"/>
        <end position="229"/>
    </location>
</feature>
<feature type="active site" description="Proton acceptor" evidence="1">
    <location>
        <position position="156"/>
    </location>
</feature>
<feature type="binding site" evidence="1">
    <location>
        <position position="10"/>
    </location>
    <ligand>
        <name>a divalent metal cation</name>
        <dbReference type="ChEBI" id="CHEBI:60240"/>
        <label>1</label>
        <note>catalytic</note>
    </ligand>
</feature>
<feature type="binding site" evidence="1">
    <location>
        <position position="10"/>
    </location>
    <ligand>
        <name>a divalent metal cation</name>
        <dbReference type="ChEBI" id="CHEBI:60240"/>
        <label>2</label>
        <note>catalytic</note>
    </ligand>
</feature>
<feature type="binding site" evidence="1">
    <location>
        <position position="10"/>
    </location>
    <ligand>
        <name>substrate</name>
    </ligand>
</feature>
<feature type="binding site" evidence="1">
    <location>
        <position position="12"/>
    </location>
    <ligand>
        <name>a divalent metal cation</name>
        <dbReference type="ChEBI" id="CHEBI:60240"/>
        <label>1</label>
        <note>catalytic</note>
    </ligand>
</feature>
<feature type="binding site" evidence="1">
    <location>
        <position position="12"/>
    </location>
    <ligand>
        <name>substrate</name>
    </ligand>
</feature>
<feature type="binding site" evidence="1">
    <location>
        <position position="55"/>
    </location>
    <ligand>
        <name>substrate</name>
    </ligand>
</feature>
<feature type="binding site" evidence="1">
    <location>
        <position position="60"/>
    </location>
    <ligand>
        <name>substrate</name>
    </ligand>
</feature>
<feature type="binding site" evidence="1">
    <location>
        <position position="161"/>
    </location>
    <ligand>
        <name>a divalent metal cation</name>
        <dbReference type="ChEBI" id="CHEBI:60240"/>
        <label>1</label>
        <note>catalytic</note>
    </ligand>
</feature>
<feature type="binding site" evidence="1">
    <location>
        <position position="161"/>
    </location>
    <ligand>
        <name>substrate</name>
    </ligand>
</feature>
<organism>
    <name type="scientific">Rickettsia typhi (strain ATCC VR-144 / Wilmington)</name>
    <dbReference type="NCBI Taxonomy" id="257363"/>
    <lineage>
        <taxon>Bacteria</taxon>
        <taxon>Pseudomonadati</taxon>
        <taxon>Pseudomonadota</taxon>
        <taxon>Alphaproteobacteria</taxon>
        <taxon>Rickettsiales</taxon>
        <taxon>Rickettsiaceae</taxon>
        <taxon>Rickettsieae</taxon>
        <taxon>Rickettsia</taxon>
        <taxon>typhus group</taxon>
    </lineage>
</organism>